<comment type="function">
    <text evidence="1">Mediates visceral muscle contractile activity (myotropic activity).</text>
</comment>
<comment type="subcellular location">
    <subcellularLocation>
        <location evidence="4">Secreted</location>
    </subcellularLocation>
</comment>
<comment type="tissue specificity">
    <text evidence="4">Expressed in the brain, subesophageal ganglion and in the retrocerebral complex (mainly corpora cardiaca).</text>
</comment>
<comment type="mass spectrometry" mass="1455.7" method="MALDI" evidence="3"/>
<comment type="similarity">
    <text evidence="2">Belongs to the pyrokinin family.</text>
</comment>
<organism>
    <name type="scientific">Celatoblatta sp. (strain Blue Mountains)</name>
    <name type="common">Cockroach</name>
    <dbReference type="NCBI Taxonomy" id="303880"/>
    <lineage>
        <taxon>Eukaryota</taxon>
        <taxon>Metazoa</taxon>
        <taxon>Ecdysozoa</taxon>
        <taxon>Arthropoda</taxon>
        <taxon>Hexapoda</taxon>
        <taxon>Insecta</taxon>
        <taxon>Pterygota</taxon>
        <taxon>Neoptera</taxon>
        <taxon>Polyneoptera</taxon>
        <taxon>Dictyoptera</taxon>
        <taxon>Blattodea</taxon>
        <taxon>Blattoidea</taxon>
        <taxon>Blattidae</taxon>
        <taxon>Blattinae</taxon>
        <taxon>Celatoblatta</taxon>
    </lineage>
</organism>
<accession>P84369</accession>
<proteinExistence type="evidence at protein level"/>
<reference evidence="5" key="1">
    <citation type="journal article" date="2005" name="Peptides">
        <title>Peptidomics of neurohemal organs from species of the cockroach family Blattidae: how do neuropeptides of closely related species differ?</title>
        <authorList>
            <person name="Predel R."/>
            <person name="Gaede G."/>
        </authorList>
    </citation>
    <scope>PROTEIN SEQUENCE</scope>
    <scope>MASS SPECTROMETRY</scope>
    <scope>AMIDATION AT LEU-12</scope>
    <source>
        <tissue evidence="3">Corpora allata</tissue>
    </source>
</reference>
<reference evidence="5" key="2">
    <citation type="submission" date="2004-11" db="UniProtKB">
        <authorList>
            <person name="Predel R."/>
            <person name="Gaede G."/>
        </authorList>
    </citation>
    <scope>SUBCELLULAR LOCATION</scope>
    <scope>TISSUE SPECIFICITY</scope>
</reference>
<keyword id="KW-0027">Amidation</keyword>
<keyword id="KW-0903">Direct protein sequencing</keyword>
<keyword id="KW-0527">Neuropeptide</keyword>
<keyword id="KW-0964">Secreted</keyword>
<evidence type="ECO:0000250" key="1">
    <source>
        <dbReference type="UniProtKB" id="P82690"/>
    </source>
</evidence>
<evidence type="ECO:0000255" key="2"/>
<evidence type="ECO:0000269" key="3">
    <source>
    </source>
</evidence>
<evidence type="ECO:0000269" key="4">
    <source ref="2"/>
</evidence>
<evidence type="ECO:0000305" key="5"/>
<dbReference type="GO" id="GO:0005576">
    <property type="term" value="C:extracellular region"/>
    <property type="evidence" value="ECO:0007669"/>
    <property type="project" value="UniProtKB-SubCell"/>
</dbReference>
<dbReference type="GO" id="GO:0007218">
    <property type="term" value="P:neuropeptide signaling pathway"/>
    <property type="evidence" value="ECO:0007669"/>
    <property type="project" value="UniProtKB-KW"/>
</dbReference>
<feature type="peptide" id="PRO_0000044326" description="Pyrokinin-4">
    <location>
        <begin position="1"/>
        <end position="12"/>
    </location>
</feature>
<feature type="modified residue" description="Leucine amide" evidence="3">
    <location>
        <position position="12"/>
    </location>
</feature>
<name>PPK4_CELBM</name>
<protein>
    <recommendedName>
        <fullName>Pyrokinin-4</fullName>
        <shortName>Cel-PK-4</shortName>
    </recommendedName>
    <alternativeName>
        <fullName>YXPRL-amide</fullName>
    </alternativeName>
</protein>
<sequence length="12" mass="1457">DHMSHDVYSPRL</sequence>